<gene>
    <name evidence="1" type="primary">rpmI</name>
    <name type="ordered locus">Strop_1883</name>
</gene>
<name>RL35_SALTO</name>
<sequence length="64" mass="7220">MPKMKSHTGMGKRVRVTGKGKIVKQQAGLRHNLEKKSSTRTRRLTGLVEVAKPDVKRIKKLLGR</sequence>
<keyword id="KW-1185">Reference proteome</keyword>
<keyword id="KW-0687">Ribonucleoprotein</keyword>
<keyword id="KW-0689">Ribosomal protein</keyword>
<comment type="similarity">
    <text evidence="1">Belongs to the bacterial ribosomal protein bL35 family.</text>
</comment>
<reference key="1">
    <citation type="journal article" date="2007" name="Proc. Natl. Acad. Sci. U.S.A.">
        <title>Genome sequencing reveals complex secondary metabolome in the marine actinomycete Salinispora tropica.</title>
        <authorList>
            <person name="Udwary D.W."/>
            <person name="Zeigler L."/>
            <person name="Asolkar R.N."/>
            <person name="Singan V."/>
            <person name="Lapidus A."/>
            <person name="Fenical W."/>
            <person name="Jensen P.R."/>
            <person name="Moore B.S."/>
        </authorList>
    </citation>
    <scope>NUCLEOTIDE SEQUENCE [LARGE SCALE GENOMIC DNA]</scope>
    <source>
        <strain>ATCC BAA-916 / DSM 44818 / JCM 13857 / NBRC 105044 / CNB-440</strain>
    </source>
</reference>
<proteinExistence type="inferred from homology"/>
<protein>
    <recommendedName>
        <fullName evidence="1">Large ribosomal subunit protein bL35</fullName>
    </recommendedName>
    <alternativeName>
        <fullName evidence="3">50S ribosomal protein L35</fullName>
    </alternativeName>
</protein>
<accession>A4X645</accession>
<feature type="chain" id="PRO_1000081625" description="Large ribosomal subunit protein bL35">
    <location>
        <begin position="1"/>
        <end position="64"/>
    </location>
</feature>
<feature type="region of interest" description="Disordered" evidence="2">
    <location>
        <begin position="1"/>
        <end position="28"/>
    </location>
</feature>
<feature type="compositionally biased region" description="Basic residues" evidence="2">
    <location>
        <begin position="1"/>
        <end position="22"/>
    </location>
</feature>
<evidence type="ECO:0000255" key="1">
    <source>
        <dbReference type="HAMAP-Rule" id="MF_00514"/>
    </source>
</evidence>
<evidence type="ECO:0000256" key="2">
    <source>
        <dbReference type="SAM" id="MobiDB-lite"/>
    </source>
</evidence>
<evidence type="ECO:0000305" key="3"/>
<organism>
    <name type="scientific">Salinispora tropica (strain ATCC BAA-916 / DSM 44818 / JCM 13857 / NBRC 105044 / CNB-440)</name>
    <dbReference type="NCBI Taxonomy" id="369723"/>
    <lineage>
        <taxon>Bacteria</taxon>
        <taxon>Bacillati</taxon>
        <taxon>Actinomycetota</taxon>
        <taxon>Actinomycetes</taxon>
        <taxon>Micromonosporales</taxon>
        <taxon>Micromonosporaceae</taxon>
        <taxon>Salinispora</taxon>
    </lineage>
</organism>
<dbReference type="EMBL" id="CP000667">
    <property type="protein sequence ID" value="ABP54345.1"/>
    <property type="molecule type" value="Genomic_DNA"/>
</dbReference>
<dbReference type="RefSeq" id="WP_011905775.1">
    <property type="nucleotide sequence ID" value="NC_009380.1"/>
</dbReference>
<dbReference type="SMR" id="A4X645"/>
<dbReference type="STRING" id="369723.Strop_1883"/>
<dbReference type="KEGG" id="stp:Strop_1883"/>
<dbReference type="PATRIC" id="fig|369723.5.peg.1931"/>
<dbReference type="eggNOG" id="COG0291">
    <property type="taxonomic scope" value="Bacteria"/>
</dbReference>
<dbReference type="HOGENOM" id="CLU_169643_4_2_11"/>
<dbReference type="Proteomes" id="UP000000235">
    <property type="component" value="Chromosome"/>
</dbReference>
<dbReference type="GO" id="GO:0022625">
    <property type="term" value="C:cytosolic large ribosomal subunit"/>
    <property type="evidence" value="ECO:0007669"/>
    <property type="project" value="TreeGrafter"/>
</dbReference>
<dbReference type="GO" id="GO:0003735">
    <property type="term" value="F:structural constituent of ribosome"/>
    <property type="evidence" value="ECO:0007669"/>
    <property type="project" value="InterPro"/>
</dbReference>
<dbReference type="GO" id="GO:0006412">
    <property type="term" value="P:translation"/>
    <property type="evidence" value="ECO:0007669"/>
    <property type="project" value="UniProtKB-UniRule"/>
</dbReference>
<dbReference type="FunFam" id="4.10.410.60:FF:000001">
    <property type="entry name" value="50S ribosomal protein L35"/>
    <property type="match status" value="1"/>
</dbReference>
<dbReference type="Gene3D" id="4.10.410.60">
    <property type="match status" value="1"/>
</dbReference>
<dbReference type="HAMAP" id="MF_00514">
    <property type="entry name" value="Ribosomal_bL35"/>
    <property type="match status" value="1"/>
</dbReference>
<dbReference type="InterPro" id="IPR001706">
    <property type="entry name" value="Ribosomal_bL35"/>
</dbReference>
<dbReference type="InterPro" id="IPR021137">
    <property type="entry name" value="Ribosomal_bL35-like"/>
</dbReference>
<dbReference type="InterPro" id="IPR037229">
    <property type="entry name" value="Ribosomal_bL35_sf"/>
</dbReference>
<dbReference type="NCBIfam" id="TIGR00001">
    <property type="entry name" value="rpmI_bact"/>
    <property type="match status" value="1"/>
</dbReference>
<dbReference type="PANTHER" id="PTHR33343">
    <property type="entry name" value="54S RIBOSOMAL PROTEIN BL35M"/>
    <property type="match status" value="1"/>
</dbReference>
<dbReference type="PANTHER" id="PTHR33343:SF1">
    <property type="entry name" value="LARGE RIBOSOMAL SUBUNIT PROTEIN BL35M"/>
    <property type="match status" value="1"/>
</dbReference>
<dbReference type="Pfam" id="PF01632">
    <property type="entry name" value="Ribosomal_L35p"/>
    <property type="match status" value="1"/>
</dbReference>
<dbReference type="PRINTS" id="PR00064">
    <property type="entry name" value="RIBOSOMALL35"/>
</dbReference>
<dbReference type="SUPFAM" id="SSF143034">
    <property type="entry name" value="L35p-like"/>
    <property type="match status" value="1"/>
</dbReference>